<proteinExistence type="evidence at protein level"/>
<dbReference type="EMBL" id="AJ574793">
    <property type="protein sequence ID" value="CAE00465.1"/>
    <property type="molecule type" value="mRNA"/>
</dbReference>
<dbReference type="PDB" id="1P8B">
    <property type="method" value="NMR"/>
    <property type="chains" value="A=27-63"/>
</dbReference>
<dbReference type="PDBsum" id="1P8B"/>
<dbReference type="SMR" id="P62931"/>
<dbReference type="EvolutionaryTrace" id="P62931"/>
<dbReference type="GO" id="GO:0045735">
    <property type="term" value="F:nutrient reservoir activity"/>
    <property type="evidence" value="ECO:0007669"/>
    <property type="project" value="UniProtKB-KW"/>
</dbReference>
<dbReference type="GO" id="GO:0090729">
    <property type="term" value="F:toxin activity"/>
    <property type="evidence" value="ECO:0007669"/>
    <property type="project" value="UniProtKB-KW"/>
</dbReference>
<dbReference type="InterPro" id="IPR012512">
    <property type="entry name" value="Albumin_I"/>
</dbReference>
<dbReference type="InterPro" id="IPR032000">
    <property type="entry name" value="Albumin_I_a"/>
</dbReference>
<dbReference type="Pfam" id="PF08027">
    <property type="entry name" value="Albumin_I"/>
    <property type="match status" value="1"/>
</dbReference>
<dbReference type="Pfam" id="PF16720">
    <property type="entry name" value="Albumin_I_a"/>
    <property type="match status" value="1"/>
</dbReference>
<dbReference type="SUPFAM" id="SSF57059">
    <property type="entry name" value="omega toxin-like"/>
    <property type="match status" value="1"/>
</dbReference>
<keyword id="KW-0002">3D-structure</keyword>
<keyword id="KW-0903">Direct protein sequencing</keyword>
<keyword id="KW-1015">Disulfide bond</keyword>
<keyword id="KW-0960">Knottin</keyword>
<keyword id="KW-0708">Seed storage protein</keyword>
<keyword id="KW-0732">Signal</keyword>
<keyword id="KW-0758">Storage protein</keyword>
<keyword id="KW-0800">Toxin</keyword>
<sequence>MASVKLASLIVLFATLGMFLTKNVGAASCNGVCSPFEMPPCGTSACRCIPVGLVIGYCRNPSGVFLRTNDEHPNLCESDADCRKKGSGKFCGHYPNPGIEYGWCFASKSEAEDFFSKITQKDLLKSVSTA</sequence>
<accession>P62931</accession>
<accession>P08687</accession>
<accession>Q40999</accession>
<accession>Q7X9N3</accession>
<accession>Q9M3X4</accession>
<name>ALB1F_PEA</name>
<protein>
    <recommendedName>
        <fullName>Albumin-1 F</fullName>
    </recommendedName>
    <alternativeName>
        <fullName>PA1 F</fullName>
    </alternativeName>
    <alternativeName>
        <fullName>PsaA1b005/PsaA1b011</fullName>
    </alternativeName>
    <component>
        <recommendedName>
            <fullName>Albumin-1 F chain b</fullName>
        </recommendedName>
        <alternativeName>
            <fullName>Leginsulin F</fullName>
        </alternativeName>
        <alternativeName>
            <fullName>PA1b F</fullName>
        </alternativeName>
    </component>
    <component>
        <recommendedName>
            <fullName>Albumin-1 F chain a</fullName>
        </recommendedName>
        <alternativeName>
            <fullName>PA1a F</fullName>
        </alternativeName>
    </component>
</protein>
<evidence type="ECO:0000250" key="1"/>
<evidence type="ECO:0000255" key="2"/>
<evidence type="ECO:0000269" key="3">
    <source>
    </source>
</evidence>
<evidence type="ECO:0000269" key="4">
    <source>
    </source>
</evidence>
<evidence type="ECO:0000269" key="5">
    <source ref="2"/>
</evidence>
<evidence type="ECO:0007829" key="6">
    <source>
        <dbReference type="PDB" id="1P8B"/>
    </source>
</evidence>
<organism>
    <name type="scientific">Pisum sativum</name>
    <name type="common">Garden pea</name>
    <name type="synonym">Lathyrus oleraceus</name>
    <dbReference type="NCBI Taxonomy" id="3888"/>
    <lineage>
        <taxon>Eukaryota</taxon>
        <taxon>Viridiplantae</taxon>
        <taxon>Streptophyta</taxon>
        <taxon>Embryophyta</taxon>
        <taxon>Tracheophyta</taxon>
        <taxon>Spermatophyta</taxon>
        <taxon>Magnoliopsida</taxon>
        <taxon>eudicotyledons</taxon>
        <taxon>Gunneridae</taxon>
        <taxon>Pentapetalae</taxon>
        <taxon>rosids</taxon>
        <taxon>fabids</taxon>
        <taxon>Fabales</taxon>
        <taxon>Fabaceae</taxon>
        <taxon>Papilionoideae</taxon>
        <taxon>50 kb inversion clade</taxon>
        <taxon>NPAAA clade</taxon>
        <taxon>Hologalegina</taxon>
        <taxon>IRL clade</taxon>
        <taxon>Fabeae</taxon>
        <taxon>Pisum</taxon>
    </lineage>
</organism>
<comment type="function">
    <text evidence="1 3 5">PA1b binds to basic 7S globulin (BG) and stimulates its phosphorylation activity. Involved in the signal transduction system to regulate the growth and differentiation as a hormone peptide (By similarity). Toxic to various insects through binding to a high affinity binding site in the insect gut.</text>
</comment>
<comment type="domain">
    <text>The presence of a 'disulfide through disulfide knot' structurally defines this protein as a knottin.</text>
</comment>
<comment type="PTM">
    <text>The C-terminal glycine may be removed from PA1b.</text>
</comment>
<feature type="signal peptide" evidence="5">
    <location>
        <begin position="1"/>
        <end position="26"/>
    </location>
</feature>
<feature type="chain" id="PRO_0000032235" description="Albumin-1 F chain b">
    <location>
        <begin position="27"/>
        <end position="63"/>
    </location>
</feature>
<feature type="propeptide" id="PRO_0000032236" evidence="2">
    <location>
        <begin position="64"/>
        <end position="69"/>
    </location>
</feature>
<feature type="chain" id="PRO_0000032237" description="Albumin-1 F chain a">
    <location>
        <begin position="70"/>
        <end position="122"/>
    </location>
</feature>
<feature type="propeptide" id="PRO_0000032238" evidence="2">
    <location>
        <begin position="123"/>
        <end position="130"/>
    </location>
</feature>
<feature type="disulfide bond" evidence="4">
    <location>
        <begin position="29"/>
        <end position="46"/>
    </location>
</feature>
<feature type="disulfide bond" evidence="4">
    <location>
        <begin position="33"/>
        <end position="48"/>
    </location>
</feature>
<feature type="disulfide bond" evidence="4">
    <location>
        <begin position="41"/>
        <end position="58"/>
    </location>
</feature>
<feature type="strand" evidence="6">
    <location>
        <begin position="30"/>
        <end position="33"/>
    </location>
</feature>
<feature type="helix" evidence="6">
    <location>
        <begin position="40"/>
        <end position="42"/>
    </location>
</feature>
<feature type="strand" evidence="6">
    <location>
        <begin position="44"/>
        <end position="49"/>
    </location>
</feature>
<feature type="strand" evidence="6">
    <location>
        <begin position="52"/>
        <end position="54"/>
    </location>
</feature>
<feature type="strand" evidence="6">
    <location>
        <begin position="56"/>
        <end position="59"/>
    </location>
</feature>
<reference key="1">
    <citation type="journal article" date="2004" name="Plant Sci.">
        <title>Molecular and biological screening for insect-toxic seed albumins from four legume species.</title>
        <authorList>
            <person name="Louis S."/>
            <person name="Delobel B."/>
            <person name="Gressent F."/>
            <person name="Rahioui I."/>
            <person name="Quillien L."/>
            <person name="Vallier A."/>
            <person name="Rahbe Y."/>
        </authorList>
        <dbReference type="AGRICOLA" id="IND43645431"/>
    </citation>
    <scope>NUCLEOTIDE SEQUENCE [MRNA]</scope>
    <source>
        <strain>cv. Frisson</strain>
        <tissue>Seed</tissue>
    </source>
</reference>
<reference key="2">
    <citation type="patent" date="1999-05-07" number="WO9958695">
        <title>Use of a polypeptide derived from a PA1b legume albumen as insecticide.</title>
        <authorList>
            <person name="Delobel B."/>
            <person name="Grenier A."/>
            <person name="Gueguen J."/>
            <person name="Ferrasson E."/>
            <person name="Mbailao M."/>
        </authorList>
    </citation>
    <scope>PROTEIN SEQUENCE OF 27-63</scope>
    <scope>FUNCTION</scope>
</reference>
<reference key="3">
    <citation type="journal article" date="2003" name="Biochemistry">
        <title>PA1b, an insecticidal protein extracted from pea seeds (Pisum sativum): 1H-2-D NMR study and molecular modeling.</title>
        <authorList>
            <person name="Jouvensal L."/>
            <person name="Quillien L."/>
            <person name="Ferrasson E."/>
            <person name="Rahbe Y."/>
            <person name="Gueguen J."/>
            <person name="Vovelle F."/>
        </authorList>
    </citation>
    <scope>STRUCTURE BY NMR OF 27-63</scope>
    <scope>DISULFIDE BONDS</scope>
</reference>
<reference key="4">
    <citation type="journal article" date="2003" name="Eur. J. Biochem.">
        <title>Characterization of a high-affinity binding site for the pea albumin 1b entomotoxin in the weevil Sitophilus.</title>
        <authorList>
            <person name="Gressent F."/>
            <person name="Rahioui I."/>
            <person name="Rahbe Y."/>
        </authorList>
    </citation>
    <scope>FUNCTION</scope>
</reference>